<protein>
    <recommendedName>
        <fullName evidence="8">Sortase D</fullName>
        <ecNumber evidence="8">3.4.22.-</ecNumber>
    </recommendedName>
</protein>
<proteinExistence type="evidence at protein level"/>
<evidence type="ECO:0000250" key="1">
    <source>
        <dbReference type="UniProtKB" id="Q2FV99"/>
    </source>
</evidence>
<evidence type="ECO:0000255" key="2"/>
<evidence type="ECO:0000256" key="3">
    <source>
        <dbReference type="SAM" id="MobiDB-lite"/>
    </source>
</evidence>
<evidence type="ECO:0000269" key="4">
    <source>
    </source>
</evidence>
<evidence type="ECO:0000269" key="5">
    <source>
    </source>
</evidence>
<evidence type="ECO:0000269" key="6">
    <source>
    </source>
</evidence>
<evidence type="ECO:0000303" key="7">
    <source>
    </source>
</evidence>
<evidence type="ECO:0000305" key="8"/>
<evidence type="ECO:0000305" key="9">
    <source>
    </source>
</evidence>
<evidence type="ECO:0000305" key="10">
    <source>
    </source>
</evidence>
<evidence type="ECO:0000305" key="11">
    <source>
    </source>
</evidence>
<evidence type="ECO:0000312" key="12">
    <source>
        <dbReference type="EMBL" id="CAB12748.1"/>
    </source>
</evidence>
<sequence>MKKVIPLFIIAAGLVIAGYGGFKLIDTNTKTEQTLKEAKLAAKKPQEASGTKNSTDQAKNKASFKPETGQASGILEIPKINAELPIVEGTDADDLEKGVGHYKDSYYPDENGQIVLSGHRDTVFRRTGELEKGDQLRLLLSYGEFTYEIVKTKIVDKDDTSIITLQHEKEELILTTCYPFSYVGNAPKRYIIYGKRVT</sequence>
<keyword id="KW-1003">Cell membrane</keyword>
<keyword id="KW-0378">Hydrolase</keyword>
<keyword id="KW-0472">Membrane</keyword>
<keyword id="KW-0645">Protease</keyword>
<keyword id="KW-1185">Reference proteome</keyword>
<keyword id="KW-0788">Thiol protease</keyword>
<keyword id="KW-0812">Transmembrane</keyword>
<keyword id="KW-1133">Transmembrane helix</keyword>
<feature type="chain" id="PRO_0000049566" description="Sortase D">
    <location>
        <begin position="1"/>
        <end position="198"/>
    </location>
</feature>
<feature type="transmembrane region" description="Helical; Note=Membrane anchor" evidence="2 8">
    <location>
        <begin position="7"/>
        <end position="25"/>
    </location>
</feature>
<feature type="region of interest" description="Disordered" evidence="3">
    <location>
        <begin position="36"/>
        <end position="67"/>
    </location>
</feature>
<feature type="compositionally biased region" description="Basic and acidic residues" evidence="3">
    <location>
        <begin position="36"/>
        <end position="46"/>
    </location>
</feature>
<feature type="compositionally biased region" description="Polar residues" evidence="3">
    <location>
        <begin position="48"/>
        <end position="57"/>
    </location>
</feature>
<feature type="active site" description="Proton donor/acceptor" evidence="1">
    <location>
        <position position="119"/>
    </location>
</feature>
<feature type="active site" description="Acyl-thioester intermediate" evidence="1">
    <location>
        <position position="177"/>
    </location>
</feature>
<feature type="site" description="Transition state stabilizer" evidence="1">
    <location>
        <position position="189"/>
    </location>
</feature>
<reference key="1">
    <citation type="journal article" date="1996" name="Microbiology">
        <title>A 22 kb DNA sequence in the cspB-glpPFKD region at 75 degrees on the Bacillus subtilis chromosome.</title>
        <authorList>
            <person name="Noback M.A."/>
            <person name="Terpstra P."/>
            <person name="Holsappel S."/>
            <person name="Venema G."/>
            <person name="Bron S."/>
        </authorList>
    </citation>
    <scope>NUCLEOTIDE SEQUENCE [GENOMIC DNA]</scope>
    <source>
        <strain>168</strain>
    </source>
</reference>
<reference key="2">
    <citation type="journal article" date="1997" name="Nature">
        <title>The complete genome sequence of the Gram-positive bacterium Bacillus subtilis.</title>
        <authorList>
            <person name="Kunst F."/>
            <person name="Ogasawara N."/>
            <person name="Moszer I."/>
            <person name="Albertini A.M."/>
            <person name="Alloni G."/>
            <person name="Azevedo V."/>
            <person name="Bertero M.G."/>
            <person name="Bessieres P."/>
            <person name="Bolotin A."/>
            <person name="Borchert S."/>
            <person name="Borriss R."/>
            <person name="Boursier L."/>
            <person name="Brans A."/>
            <person name="Braun M."/>
            <person name="Brignell S.C."/>
            <person name="Bron S."/>
            <person name="Brouillet S."/>
            <person name="Bruschi C.V."/>
            <person name="Caldwell B."/>
            <person name="Capuano V."/>
            <person name="Carter N.M."/>
            <person name="Choi S.-K."/>
            <person name="Codani J.-J."/>
            <person name="Connerton I.F."/>
            <person name="Cummings N.J."/>
            <person name="Daniel R.A."/>
            <person name="Denizot F."/>
            <person name="Devine K.M."/>
            <person name="Duesterhoeft A."/>
            <person name="Ehrlich S.D."/>
            <person name="Emmerson P.T."/>
            <person name="Entian K.-D."/>
            <person name="Errington J."/>
            <person name="Fabret C."/>
            <person name="Ferrari E."/>
            <person name="Foulger D."/>
            <person name="Fritz C."/>
            <person name="Fujita M."/>
            <person name="Fujita Y."/>
            <person name="Fuma S."/>
            <person name="Galizzi A."/>
            <person name="Galleron N."/>
            <person name="Ghim S.-Y."/>
            <person name="Glaser P."/>
            <person name="Goffeau A."/>
            <person name="Golightly E.J."/>
            <person name="Grandi G."/>
            <person name="Guiseppi G."/>
            <person name="Guy B.J."/>
            <person name="Haga K."/>
            <person name="Haiech J."/>
            <person name="Harwood C.R."/>
            <person name="Henaut A."/>
            <person name="Hilbert H."/>
            <person name="Holsappel S."/>
            <person name="Hosono S."/>
            <person name="Hullo M.-F."/>
            <person name="Itaya M."/>
            <person name="Jones L.-M."/>
            <person name="Joris B."/>
            <person name="Karamata D."/>
            <person name="Kasahara Y."/>
            <person name="Klaerr-Blanchard M."/>
            <person name="Klein C."/>
            <person name="Kobayashi Y."/>
            <person name="Koetter P."/>
            <person name="Koningstein G."/>
            <person name="Krogh S."/>
            <person name="Kumano M."/>
            <person name="Kurita K."/>
            <person name="Lapidus A."/>
            <person name="Lardinois S."/>
            <person name="Lauber J."/>
            <person name="Lazarevic V."/>
            <person name="Lee S.-M."/>
            <person name="Levine A."/>
            <person name="Liu H."/>
            <person name="Masuda S."/>
            <person name="Mauel C."/>
            <person name="Medigue C."/>
            <person name="Medina N."/>
            <person name="Mellado R.P."/>
            <person name="Mizuno M."/>
            <person name="Moestl D."/>
            <person name="Nakai S."/>
            <person name="Noback M."/>
            <person name="Noone D."/>
            <person name="O'Reilly M."/>
            <person name="Ogawa K."/>
            <person name="Ogiwara A."/>
            <person name="Oudega B."/>
            <person name="Park S.-H."/>
            <person name="Parro V."/>
            <person name="Pohl T.M."/>
            <person name="Portetelle D."/>
            <person name="Porwollik S."/>
            <person name="Prescott A.M."/>
            <person name="Presecan E."/>
            <person name="Pujic P."/>
            <person name="Purnelle B."/>
            <person name="Rapoport G."/>
            <person name="Rey M."/>
            <person name="Reynolds S."/>
            <person name="Rieger M."/>
            <person name="Rivolta C."/>
            <person name="Rocha E."/>
            <person name="Roche B."/>
            <person name="Rose M."/>
            <person name="Sadaie Y."/>
            <person name="Sato T."/>
            <person name="Scanlan E."/>
            <person name="Schleich S."/>
            <person name="Schroeter R."/>
            <person name="Scoffone F."/>
            <person name="Sekiguchi J."/>
            <person name="Sekowska A."/>
            <person name="Seror S.J."/>
            <person name="Serror P."/>
            <person name="Shin B.-S."/>
            <person name="Soldo B."/>
            <person name="Sorokin A."/>
            <person name="Tacconi E."/>
            <person name="Takagi T."/>
            <person name="Takahashi H."/>
            <person name="Takemaru K."/>
            <person name="Takeuchi M."/>
            <person name="Tamakoshi A."/>
            <person name="Tanaka T."/>
            <person name="Terpstra P."/>
            <person name="Tognoni A."/>
            <person name="Tosato V."/>
            <person name="Uchiyama S."/>
            <person name="Vandenbol M."/>
            <person name="Vannier F."/>
            <person name="Vassarotti A."/>
            <person name="Viari A."/>
            <person name="Wambutt R."/>
            <person name="Wedler E."/>
            <person name="Wedler H."/>
            <person name="Weitzenegger T."/>
            <person name="Winters P."/>
            <person name="Wipat A."/>
            <person name="Yamamoto H."/>
            <person name="Yamane K."/>
            <person name="Yasumoto K."/>
            <person name="Yata K."/>
            <person name="Yoshida K."/>
            <person name="Yoshikawa H.-F."/>
            <person name="Zumstein E."/>
            <person name="Yoshikawa H."/>
            <person name="Danchin A."/>
        </authorList>
    </citation>
    <scope>NUCLEOTIDE SEQUENCE [LARGE SCALE GENOMIC DNA]</scope>
    <source>
        <strain>168</strain>
    </source>
</reference>
<reference key="3">
    <citation type="journal article" date="2011" name="AMB Express">
        <title>Analysis and application of Bacillus subtilis sortases to anchor recombinant proteins on the cell wall.</title>
        <authorList>
            <person name="Nguyen H.D."/>
            <person name="Phan T.T."/>
            <person name="Schumann W."/>
        </authorList>
    </citation>
    <scope>FUNCTION AS A SORTASE</scope>
    <scope>INDUCTION</scope>
</reference>
<reference key="4">
    <citation type="journal article" date="2011" name="Proteomics">
        <title>Functional analysis of the sortase YhcS in Bacillus subtilis.</title>
        <authorList>
            <person name="Fasehee H."/>
            <person name="Westers H."/>
            <person name="Bolhuis A."/>
            <person name="Antelmann H."/>
            <person name="Hecker M."/>
            <person name="Quax W.J."/>
            <person name="Mirlohi A.F."/>
            <person name="van Dijl J.M."/>
            <person name="Ahmadian G."/>
        </authorList>
    </citation>
    <scope>FUNCTION AS A SORTASE</scope>
    <scope>DISRUPTION PHENOTYPE</scope>
</reference>
<reference key="5">
    <citation type="journal article" date="2012" name="J. Bacteriol.">
        <title>Functional characterization and localization of a Bacillus subtilis sortase and its substrate and use of this sortase system to covalently anchor a heterologous protein to the B. subtilis cell wall for surface display.</title>
        <authorList>
            <person name="Liew P.X."/>
            <person name="Wang C.L."/>
            <person name="Wong S.L."/>
        </authorList>
    </citation>
    <scope>FUNCTION</scope>
    <scope>SUBCELLULAR LOCATION</scope>
    <scope>DISRUPTION PHENOTYPE</scope>
</reference>
<gene>
    <name evidence="7" type="primary">srtD</name>
    <name evidence="12" type="synonym">srtA</name>
    <name type="synonym">yhcS</name>
    <name type="ordered locus">BSU09200</name>
</gene>
<comment type="function">
    <text evidence="4 5 6 9 10 11">Transpeptidase that anchors surface proteins to the cell wall (PubMed:21800427, PubMed:21906378, PubMed:22020651). Recognizes and modifies its substrate by proteolytic cleavage of a C-terminal sorting signal. Following cleavage, a covalent intermediate is formed via a thioester bond between the sortase and its substrate, which is then transferred and covalently attached to the cell wall (Probable). This sortase recognizes a Leu-Pro-Asp-Thr-Ser/Ala (LPDTS/A) motif (PubMed:21906378, PubMed:22020651). It has two substrates, YhcR and YfkN (PubMed:21800427, PubMed:21906378, PubMed:22020651).</text>
</comment>
<comment type="subcellular location">
    <subcellularLocation>
        <location evidence="6">Cell membrane</location>
        <topology evidence="8">Single-pass type II membrane protein</topology>
    </subcellularLocation>
    <text evidence="6">Nonuniformly distributed around the cell periphery in the form of patches or short arcs.</text>
</comment>
<comment type="induction">
    <text evidence="5">Preferentially expressed in the late stationary phase.</text>
</comment>
<comment type="disruption phenotype">
    <text evidence="4 6">Mutant releases elevated levels of the sortase substrate YfkN into the culture medium upon phosphate starvation (PubMed:21800427). Inactivation of the gene abolishes the cell wall anchoring of a fusion protein composed of a beta-lactamase reporter and the C-terminal region of the sortase substrate YhcR (PubMed:22020651).</text>
</comment>
<comment type="similarity">
    <text evidence="8">Belongs to the bacterial sortase family. Class D subfamily.</text>
</comment>
<organism>
    <name type="scientific">Bacillus subtilis (strain 168)</name>
    <dbReference type="NCBI Taxonomy" id="224308"/>
    <lineage>
        <taxon>Bacteria</taxon>
        <taxon>Bacillati</taxon>
        <taxon>Bacillota</taxon>
        <taxon>Bacilli</taxon>
        <taxon>Bacillales</taxon>
        <taxon>Bacillaceae</taxon>
        <taxon>Bacillus</taxon>
    </lineage>
</organism>
<dbReference type="EC" id="3.4.22.-" evidence="8"/>
<dbReference type="EMBL" id="X96983">
    <property type="protein sequence ID" value="CAA65703.1"/>
    <property type="molecule type" value="Genomic_DNA"/>
</dbReference>
<dbReference type="EMBL" id="AL009126">
    <property type="protein sequence ID" value="CAB12748.1"/>
    <property type="molecule type" value="Genomic_DNA"/>
</dbReference>
<dbReference type="PIR" id="G69823">
    <property type="entry name" value="G69823"/>
</dbReference>
<dbReference type="RefSeq" id="NP_388801.1">
    <property type="nucleotide sequence ID" value="NC_000964.3"/>
</dbReference>
<dbReference type="RefSeq" id="WP_003244666.1">
    <property type="nucleotide sequence ID" value="NZ_OZ025638.1"/>
</dbReference>
<dbReference type="SMR" id="P54603"/>
<dbReference type="FunCoup" id="P54603">
    <property type="interactions" value="59"/>
</dbReference>
<dbReference type="STRING" id="224308.BSU09200"/>
<dbReference type="MEROPS" id="C60.008"/>
<dbReference type="PaxDb" id="224308-BSU09200"/>
<dbReference type="EnsemblBacteria" id="CAB12748">
    <property type="protein sequence ID" value="CAB12748"/>
    <property type="gene ID" value="BSU_09200"/>
</dbReference>
<dbReference type="GeneID" id="939748"/>
<dbReference type="KEGG" id="bsu:BSU09200"/>
<dbReference type="PATRIC" id="fig|224308.179.peg.992"/>
<dbReference type="eggNOG" id="COG3764">
    <property type="taxonomic scope" value="Bacteria"/>
</dbReference>
<dbReference type="InParanoid" id="P54603"/>
<dbReference type="OrthoDB" id="165822at2"/>
<dbReference type="PhylomeDB" id="P54603"/>
<dbReference type="BioCyc" id="BSUB:BSU09200-MONOMER"/>
<dbReference type="Proteomes" id="UP000001570">
    <property type="component" value="Chromosome"/>
</dbReference>
<dbReference type="GO" id="GO:0005886">
    <property type="term" value="C:plasma membrane"/>
    <property type="evidence" value="ECO:0007669"/>
    <property type="project" value="UniProtKB-SubCell"/>
</dbReference>
<dbReference type="GO" id="GO:0008234">
    <property type="term" value="F:cysteine-type peptidase activity"/>
    <property type="evidence" value="ECO:0007669"/>
    <property type="project" value="UniProtKB-KW"/>
</dbReference>
<dbReference type="GO" id="GO:0006508">
    <property type="term" value="P:proteolysis"/>
    <property type="evidence" value="ECO:0007669"/>
    <property type="project" value="UniProtKB-KW"/>
</dbReference>
<dbReference type="CDD" id="cd05828">
    <property type="entry name" value="Sortase_D_1"/>
    <property type="match status" value="1"/>
</dbReference>
<dbReference type="Gene3D" id="2.40.260.10">
    <property type="entry name" value="Sortase"/>
    <property type="match status" value="1"/>
</dbReference>
<dbReference type="InterPro" id="IPR005754">
    <property type="entry name" value="Sortase"/>
</dbReference>
<dbReference type="InterPro" id="IPR053525">
    <property type="entry name" value="Sortase_D"/>
</dbReference>
<dbReference type="InterPro" id="IPR041999">
    <property type="entry name" value="Sortase_D_1"/>
</dbReference>
<dbReference type="InterPro" id="IPR023365">
    <property type="entry name" value="Sortase_dom-sf"/>
</dbReference>
<dbReference type="NCBIfam" id="NF033746">
    <property type="entry name" value="class_D_sortase"/>
    <property type="match status" value="1"/>
</dbReference>
<dbReference type="NCBIfam" id="TIGR01076">
    <property type="entry name" value="sortase_fam"/>
    <property type="match status" value="1"/>
</dbReference>
<dbReference type="Pfam" id="PF04203">
    <property type="entry name" value="Sortase"/>
    <property type="match status" value="1"/>
</dbReference>
<dbReference type="SUPFAM" id="SSF63817">
    <property type="entry name" value="Sortase"/>
    <property type="match status" value="1"/>
</dbReference>
<name>SRTD_BACSU</name>
<accession>P54603</accession>